<proteinExistence type="inferred from homology"/>
<accession>Q5WB95</accession>
<reference key="1">
    <citation type="submission" date="2003-10" db="EMBL/GenBank/DDBJ databases">
        <title>The complete genome sequence of the alkaliphilic Bacillus clausii KSM-K16.</title>
        <authorList>
            <person name="Takaki Y."/>
            <person name="Kageyama Y."/>
            <person name="Shimamura S."/>
            <person name="Suzuki H."/>
            <person name="Nishi S."/>
            <person name="Hatada Y."/>
            <person name="Kawai S."/>
            <person name="Ito S."/>
            <person name="Horikoshi K."/>
        </authorList>
    </citation>
    <scope>NUCLEOTIDE SEQUENCE [LARGE SCALE GENOMIC DNA]</scope>
    <source>
        <strain>KSM-K16</strain>
    </source>
</reference>
<protein>
    <recommendedName>
        <fullName evidence="1">FMN-dependent NADH:quinone oxidoreductase</fullName>
        <ecNumber evidence="1">1.6.5.-</ecNumber>
    </recommendedName>
    <alternativeName>
        <fullName evidence="1">Azo-dye reductase</fullName>
    </alternativeName>
    <alternativeName>
        <fullName evidence="1">FMN-dependent NADH-azo compound oxidoreductase</fullName>
    </alternativeName>
    <alternativeName>
        <fullName evidence="1">FMN-dependent NADH-azoreductase</fullName>
        <ecNumber evidence="1">1.7.1.17</ecNumber>
    </alternativeName>
</protein>
<comment type="function">
    <text evidence="1">Quinone reductase that provides resistance to thiol-specific stress caused by electrophilic quinones.</text>
</comment>
<comment type="function">
    <text evidence="1">Also exhibits azoreductase activity. Catalyzes the reductive cleavage of the azo bond in aromatic azo compounds to the corresponding amines.</text>
</comment>
<comment type="catalytic activity">
    <reaction evidence="1">
        <text>2 a quinone + NADH + H(+) = 2 a 1,4-benzosemiquinone + NAD(+)</text>
        <dbReference type="Rhea" id="RHEA:65952"/>
        <dbReference type="ChEBI" id="CHEBI:15378"/>
        <dbReference type="ChEBI" id="CHEBI:57540"/>
        <dbReference type="ChEBI" id="CHEBI:57945"/>
        <dbReference type="ChEBI" id="CHEBI:132124"/>
        <dbReference type="ChEBI" id="CHEBI:134225"/>
    </reaction>
</comment>
<comment type="catalytic activity">
    <reaction evidence="1">
        <text>N,N-dimethyl-1,4-phenylenediamine + anthranilate + 2 NAD(+) = 2-(4-dimethylaminophenyl)diazenylbenzoate + 2 NADH + 2 H(+)</text>
        <dbReference type="Rhea" id="RHEA:55872"/>
        <dbReference type="ChEBI" id="CHEBI:15378"/>
        <dbReference type="ChEBI" id="CHEBI:15783"/>
        <dbReference type="ChEBI" id="CHEBI:16567"/>
        <dbReference type="ChEBI" id="CHEBI:57540"/>
        <dbReference type="ChEBI" id="CHEBI:57945"/>
        <dbReference type="ChEBI" id="CHEBI:71579"/>
        <dbReference type="EC" id="1.7.1.17"/>
    </reaction>
</comment>
<comment type="cofactor">
    <cofactor evidence="1">
        <name>FMN</name>
        <dbReference type="ChEBI" id="CHEBI:58210"/>
    </cofactor>
    <text evidence="1">Binds 1 FMN per subunit.</text>
</comment>
<comment type="subunit">
    <text evidence="1">Homodimer.</text>
</comment>
<comment type="similarity">
    <text evidence="1">Belongs to the azoreductase type 1 family.</text>
</comment>
<feature type="chain" id="PRO_0000245888" description="FMN-dependent NADH:quinone oxidoreductase">
    <location>
        <begin position="1"/>
        <end position="207"/>
    </location>
</feature>
<feature type="binding site" evidence="1">
    <location>
        <position position="10"/>
    </location>
    <ligand>
        <name>FMN</name>
        <dbReference type="ChEBI" id="CHEBI:58210"/>
    </ligand>
</feature>
<evidence type="ECO:0000255" key="1">
    <source>
        <dbReference type="HAMAP-Rule" id="MF_01216"/>
    </source>
</evidence>
<sequence length="207" mass="22853">MATVLMINASDRLEQGVSVKMYNQFLNSYKEAHPNDTVEELNLFAEKLPYYGNTAITGQYKKAQGVELTGEEKEIVETIERYQEQFLNADKVVFAFPLWNFTVPAPLITYLSYLAQAGKTFRYTETGPVGLVGSKEVALLNARGGVYSNEEMAALEMAANLVRTTMAFWGITQPVEVIIEGHNAAPDQADAIISEGLENVKKAAVAF</sequence>
<dbReference type="EC" id="1.6.5.-" evidence="1"/>
<dbReference type="EC" id="1.7.1.17" evidence="1"/>
<dbReference type="EMBL" id="AP006627">
    <property type="protein sequence ID" value="BAD66365.1"/>
    <property type="molecule type" value="Genomic_DNA"/>
</dbReference>
<dbReference type="RefSeq" id="WP_011248668.1">
    <property type="nucleotide sequence ID" value="NC_006582.1"/>
</dbReference>
<dbReference type="SMR" id="Q5WB95"/>
<dbReference type="STRING" id="66692.ABC3834"/>
<dbReference type="KEGG" id="bcl:ABC3834"/>
<dbReference type="eggNOG" id="COG1182">
    <property type="taxonomic scope" value="Bacteria"/>
</dbReference>
<dbReference type="HOGENOM" id="CLU_088964_3_1_9"/>
<dbReference type="OrthoDB" id="9805013at2"/>
<dbReference type="Proteomes" id="UP000001168">
    <property type="component" value="Chromosome"/>
</dbReference>
<dbReference type="GO" id="GO:0009055">
    <property type="term" value="F:electron transfer activity"/>
    <property type="evidence" value="ECO:0007669"/>
    <property type="project" value="UniProtKB-UniRule"/>
</dbReference>
<dbReference type="GO" id="GO:0010181">
    <property type="term" value="F:FMN binding"/>
    <property type="evidence" value="ECO:0007669"/>
    <property type="project" value="UniProtKB-UniRule"/>
</dbReference>
<dbReference type="GO" id="GO:0016652">
    <property type="term" value="F:oxidoreductase activity, acting on NAD(P)H as acceptor"/>
    <property type="evidence" value="ECO:0007669"/>
    <property type="project" value="UniProtKB-UniRule"/>
</dbReference>
<dbReference type="GO" id="GO:0016655">
    <property type="term" value="F:oxidoreductase activity, acting on NAD(P)H, quinone or similar compound as acceptor"/>
    <property type="evidence" value="ECO:0007669"/>
    <property type="project" value="InterPro"/>
</dbReference>
<dbReference type="Gene3D" id="3.40.50.360">
    <property type="match status" value="1"/>
</dbReference>
<dbReference type="HAMAP" id="MF_01216">
    <property type="entry name" value="Azoreductase_type1"/>
    <property type="match status" value="1"/>
</dbReference>
<dbReference type="InterPro" id="IPR003680">
    <property type="entry name" value="Flavodoxin_fold"/>
</dbReference>
<dbReference type="InterPro" id="IPR029039">
    <property type="entry name" value="Flavoprotein-like_sf"/>
</dbReference>
<dbReference type="InterPro" id="IPR050104">
    <property type="entry name" value="FMN-dep_NADH:Q_OxRdtase_AzoR1"/>
</dbReference>
<dbReference type="InterPro" id="IPR023048">
    <property type="entry name" value="NADH:quinone_OxRdtase_FMN_depd"/>
</dbReference>
<dbReference type="NCBIfam" id="NF010075">
    <property type="entry name" value="PRK13556.1"/>
    <property type="match status" value="1"/>
</dbReference>
<dbReference type="PANTHER" id="PTHR43741">
    <property type="entry name" value="FMN-DEPENDENT NADH-AZOREDUCTASE 1"/>
    <property type="match status" value="1"/>
</dbReference>
<dbReference type="PANTHER" id="PTHR43741:SF4">
    <property type="entry name" value="FMN-DEPENDENT NADH:QUINONE OXIDOREDUCTASE"/>
    <property type="match status" value="1"/>
</dbReference>
<dbReference type="Pfam" id="PF02525">
    <property type="entry name" value="Flavodoxin_2"/>
    <property type="match status" value="1"/>
</dbReference>
<dbReference type="SUPFAM" id="SSF52218">
    <property type="entry name" value="Flavoproteins"/>
    <property type="match status" value="1"/>
</dbReference>
<name>AZOR_SHOC1</name>
<organism>
    <name type="scientific">Shouchella clausii (strain KSM-K16)</name>
    <name type="common">Alkalihalobacillus clausii</name>
    <dbReference type="NCBI Taxonomy" id="66692"/>
    <lineage>
        <taxon>Bacteria</taxon>
        <taxon>Bacillati</taxon>
        <taxon>Bacillota</taxon>
        <taxon>Bacilli</taxon>
        <taxon>Bacillales</taxon>
        <taxon>Bacillaceae</taxon>
        <taxon>Shouchella</taxon>
    </lineage>
</organism>
<keyword id="KW-0285">Flavoprotein</keyword>
<keyword id="KW-0288">FMN</keyword>
<keyword id="KW-0520">NAD</keyword>
<keyword id="KW-0560">Oxidoreductase</keyword>
<keyword id="KW-1185">Reference proteome</keyword>
<gene>
    <name evidence="1" type="primary">azoR</name>
    <name type="ordered locus">ABC3834</name>
</gene>